<gene>
    <name type="primary">rps12-A</name>
</gene>
<gene>
    <name type="primary">rps12-B</name>
</gene>
<dbReference type="EMBL" id="AP009370">
    <property type="protein sequence ID" value="BAF50134.1"/>
    <property type="molecule type" value="Genomic_DNA"/>
</dbReference>
<dbReference type="EMBL" id="AP009370">
    <property type="protein sequence ID" value="BAF50157.1"/>
    <property type="molecule type" value="Genomic_DNA"/>
</dbReference>
<dbReference type="SMR" id="A4QKC9"/>
<dbReference type="GO" id="GO:0009507">
    <property type="term" value="C:chloroplast"/>
    <property type="evidence" value="ECO:0007669"/>
    <property type="project" value="UniProtKB-SubCell"/>
</dbReference>
<dbReference type="GO" id="GO:0015935">
    <property type="term" value="C:small ribosomal subunit"/>
    <property type="evidence" value="ECO:0007669"/>
    <property type="project" value="InterPro"/>
</dbReference>
<dbReference type="GO" id="GO:0019843">
    <property type="term" value="F:rRNA binding"/>
    <property type="evidence" value="ECO:0007669"/>
    <property type="project" value="UniProtKB-UniRule"/>
</dbReference>
<dbReference type="GO" id="GO:0003735">
    <property type="term" value="F:structural constituent of ribosome"/>
    <property type="evidence" value="ECO:0007669"/>
    <property type="project" value="InterPro"/>
</dbReference>
<dbReference type="GO" id="GO:0006412">
    <property type="term" value="P:translation"/>
    <property type="evidence" value="ECO:0007669"/>
    <property type="project" value="UniProtKB-UniRule"/>
</dbReference>
<dbReference type="CDD" id="cd03368">
    <property type="entry name" value="Ribosomal_S12"/>
    <property type="match status" value="1"/>
</dbReference>
<dbReference type="FunFam" id="2.40.50.140:FF:000008">
    <property type="entry name" value="30S ribosomal protein S12, chloroplastic"/>
    <property type="match status" value="1"/>
</dbReference>
<dbReference type="Gene3D" id="2.40.50.140">
    <property type="entry name" value="Nucleic acid-binding proteins"/>
    <property type="match status" value="1"/>
</dbReference>
<dbReference type="HAMAP" id="MF_00403_B">
    <property type="entry name" value="Ribosomal_uS12_B"/>
    <property type="match status" value="1"/>
</dbReference>
<dbReference type="InterPro" id="IPR012340">
    <property type="entry name" value="NA-bd_OB-fold"/>
</dbReference>
<dbReference type="InterPro" id="IPR006032">
    <property type="entry name" value="Ribosomal_uS12"/>
</dbReference>
<dbReference type="InterPro" id="IPR005679">
    <property type="entry name" value="Ribosomal_uS12_bac"/>
</dbReference>
<dbReference type="NCBIfam" id="TIGR00981">
    <property type="entry name" value="rpsL_bact"/>
    <property type="match status" value="1"/>
</dbReference>
<dbReference type="PANTHER" id="PTHR11652">
    <property type="entry name" value="30S RIBOSOMAL PROTEIN S12 FAMILY MEMBER"/>
    <property type="match status" value="1"/>
</dbReference>
<dbReference type="Pfam" id="PF00164">
    <property type="entry name" value="Ribosom_S12_S23"/>
    <property type="match status" value="1"/>
</dbReference>
<dbReference type="PIRSF" id="PIRSF002133">
    <property type="entry name" value="Ribosomal_S12/S23"/>
    <property type="match status" value="1"/>
</dbReference>
<dbReference type="PRINTS" id="PR01034">
    <property type="entry name" value="RIBOSOMALS12"/>
</dbReference>
<dbReference type="SUPFAM" id="SSF50249">
    <property type="entry name" value="Nucleic acid-binding proteins"/>
    <property type="match status" value="1"/>
</dbReference>
<dbReference type="PROSITE" id="PS00055">
    <property type="entry name" value="RIBOSOMAL_S12"/>
    <property type="match status" value="1"/>
</dbReference>
<evidence type="ECO:0000250" key="1"/>
<evidence type="ECO:0000255" key="2">
    <source>
        <dbReference type="HAMAP-Rule" id="MF_00403"/>
    </source>
</evidence>
<evidence type="ECO:0000305" key="3"/>
<keyword id="KW-0150">Chloroplast</keyword>
<keyword id="KW-0934">Plastid</keyword>
<keyword id="KW-0687">Ribonucleoprotein</keyword>
<keyword id="KW-0689">Ribosomal protein</keyword>
<keyword id="KW-0694">RNA-binding</keyword>
<keyword id="KW-0699">rRNA-binding</keyword>
<geneLocation type="chloroplast"/>
<proteinExistence type="inferred from homology"/>
<comment type="function">
    <text evidence="1">With S4 and S5 plays an important role in translational accuracy. Located at the interface of the 30S and 50S subunits (By similarity).</text>
</comment>
<comment type="subunit">
    <text evidence="1">Part of the 30S ribosomal subunit.</text>
</comment>
<comment type="subcellular location">
    <subcellularLocation>
        <location>Plastid</location>
        <location>Chloroplast</location>
    </subcellularLocation>
</comment>
<comment type="similarity">
    <text evidence="3">Belongs to the universal ribosomal protein uS12 family.</text>
</comment>
<reference key="1">
    <citation type="submission" date="2007-03" db="EMBL/GenBank/DDBJ databases">
        <title>Sequencing analysis of Barbarea verna chloroplast DNA.</title>
        <authorList>
            <person name="Hosouchi T."/>
            <person name="Tsuruoka H."/>
            <person name="Kotani H."/>
        </authorList>
    </citation>
    <scope>NUCLEOTIDE SEQUENCE [LARGE SCALE GENOMIC DNA]</scope>
</reference>
<protein>
    <recommendedName>
        <fullName evidence="2">Small ribosomal subunit protein uS12cz/uS12cy</fullName>
    </recommendedName>
    <alternativeName>
        <fullName evidence="3">30S ribosomal protein S12, chloroplastic</fullName>
    </alternativeName>
</protein>
<name>RR12_BARVE</name>
<accession>A4QKC9</accession>
<feature type="chain" id="PRO_0000296063" description="Small ribosomal subunit protein uS12cz/uS12cy">
    <location>
        <begin position="1"/>
        <end position="123"/>
    </location>
</feature>
<organism>
    <name type="scientific">Barbarea verna</name>
    <name type="common">Land cress</name>
    <name type="synonym">Erysimum vernum</name>
    <dbReference type="NCBI Taxonomy" id="50458"/>
    <lineage>
        <taxon>Eukaryota</taxon>
        <taxon>Viridiplantae</taxon>
        <taxon>Streptophyta</taxon>
        <taxon>Embryophyta</taxon>
        <taxon>Tracheophyta</taxon>
        <taxon>Spermatophyta</taxon>
        <taxon>Magnoliopsida</taxon>
        <taxon>eudicotyledons</taxon>
        <taxon>Gunneridae</taxon>
        <taxon>Pentapetalae</taxon>
        <taxon>rosids</taxon>
        <taxon>malvids</taxon>
        <taxon>Brassicales</taxon>
        <taxon>Brassicaceae</taxon>
        <taxon>Cardamineae</taxon>
        <taxon>Barbarea</taxon>
    </lineage>
</organism>
<sequence length="123" mass="13764">MPTIKQLIRNTRQPIRNVTKSPALRGCPQRRGTCTRVYTITPKKPNSALRKVARVRLTSGFEITAYIPGIGHNLQEHSVVLVRGGRVKDLPGVRYHIVRGTLDAVGVKDRQQGRSKYGVKKPK</sequence>